<organism>
    <name type="scientific">Helicobacter pylori (strain J99 / ATCC 700824)</name>
    <name type="common">Campylobacter pylori J99</name>
    <dbReference type="NCBI Taxonomy" id="85963"/>
    <lineage>
        <taxon>Bacteria</taxon>
        <taxon>Pseudomonadati</taxon>
        <taxon>Campylobacterota</taxon>
        <taxon>Epsilonproteobacteria</taxon>
        <taxon>Campylobacterales</taxon>
        <taxon>Helicobacteraceae</taxon>
        <taxon>Helicobacter</taxon>
    </lineage>
</organism>
<dbReference type="EC" id="1.1.1.205" evidence="1"/>
<dbReference type="EMBL" id="AE001439">
    <property type="protein sequence ID" value="AAD06347.1"/>
    <property type="molecule type" value="Genomic_DNA"/>
</dbReference>
<dbReference type="PIR" id="H71890">
    <property type="entry name" value="H71890"/>
</dbReference>
<dbReference type="RefSeq" id="WP_001221693.1">
    <property type="nucleotide sequence ID" value="NZ_CP011330.1"/>
</dbReference>
<dbReference type="SMR" id="Q9ZL14"/>
<dbReference type="IntAct" id="Q9ZL14">
    <property type="interactions" value="1"/>
</dbReference>
<dbReference type="KEGG" id="hpj:jhp_0768"/>
<dbReference type="PATRIC" id="fig|85963.30.peg.207"/>
<dbReference type="eggNOG" id="COG0516">
    <property type="taxonomic scope" value="Bacteria"/>
</dbReference>
<dbReference type="eggNOG" id="COG0517">
    <property type="taxonomic scope" value="Bacteria"/>
</dbReference>
<dbReference type="UniPathway" id="UPA00601">
    <property type="reaction ID" value="UER00295"/>
</dbReference>
<dbReference type="Proteomes" id="UP000000804">
    <property type="component" value="Chromosome"/>
</dbReference>
<dbReference type="GO" id="GO:0003938">
    <property type="term" value="F:IMP dehydrogenase activity"/>
    <property type="evidence" value="ECO:0007669"/>
    <property type="project" value="UniProtKB-UniRule"/>
</dbReference>
<dbReference type="GO" id="GO:0046872">
    <property type="term" value="F:metal ion binding"/>
    <property type="evidence" value="ECO:0007669"/>
    <property type="project" value="UniProtKB-UniRule"/>
</dbReference>
<dbReference type="GO" id="GO:0000166">
    <property type="term" value="F:nucleotide binding"/>
    <property type="evidence" value="ECO:0007669"/>
    <property type="project" value="UniProtKB-UniRule"/>
</dbReference>
<dbReference type="GO" id="GO:0006177">
    <property type="term" value="P:GMP biosynthetic process"/>
    <property type="evidence" value="ECO:0007669"/>
    <property type="project" value="UniProtKB-UniRule"/>
</dbReference>
<dbReference type="GO" id="GO:0006183">
    <property type="term" value="P:GTP biosynthetic process"/>
    <property type="evidence" value="ECO:0007669"/>
    <property type="project" value="TreeGrafter"/>
</dbReference>
<dbReference type="CDD" id="cd04601">
    <property type="entry name" value="CBS_pair_IMPDH"/>
    <property type="match status" value="1"/>
</dbReference>
<dbReference type="CDD" id="cd00381">
    <property type="entry name" value="IMPDH"/>
    <property type="match status" value="1"/>
</dbReference>
<dbReference type="FunFam" id="3.20.20.70:FF:000003">
    <property type="entry name" value="GMP reductase"/>
    <property type="match status" value="1"/>
</dbReference>
<dbReference type="Gene3D" id="3.20.20.70">
    <property type="entry name" value="Aldolase class I"/>
    <property type="match status" value="1"/>
</dbReference>
<dbReference type="HAMAP" id="MF_01964">
    <property type="entry name" value="IMPDH"/>
    <property type="match status" value="1"/>
</dbReference>
<dbReference type="InterPro" id="IPR013785">
    <property type="entry name" value="Aldolase_TIM"/>
</dbReference>
<dbReference type="InterPro" id="IPR000644">
    <property type="entry name" value="CBS_dom"/>
</dbReference>
<dbReference type="InterPro" id="IPR046342">
    <property type="entry name" value="CBS_dom_sf"/>
</dbReference>
<dbReference type="InterPro" id="IPR005990">
    <property type="entry name" value="IMP_DH"/>
</dbReference>
<dbReference type="InterPro" id="IPR015875">
    <property type="entry name" value="IMP_DH/GMP_Rdtase_CS"/>
</dbReference>
<dbReference type="InterPro" id="IPR001093">
    <property type="entry name" value="IMP_DH_GMPRt"/>
</dbReference>
<dbReference type="NCBIfam" id="TIGR01302">
    <property type="entry name" value="IMP_dehydrog"/>
    <property type="match status" value="1"/>
</dbReference>
<dbReference type="PANTHER" id="PTHR11911:SF111">
    <property type="entry name" value="INOSINE-5'-MONOPHOSPHATE DEHYDROGENASE"/>
    <property type="match status" value="1"/>
</dbReference>
<dbReference type="PANTHER" id="PTHR11911">
    <property type="entry name" value="INOSINE-5-MONOPHOSPHATE DEHYDROGENASE RELATED"/>
    <property type="match status" value="1"/>
</dbReference>
<dbReference type="Pfam" id="PF00571">
    <property type="entry name" value="CBS"/>
    <property type="match status" value="2"/>
</dbReference>
<dbReference type="Pfam" id="PF00478">
    <property type="entry name" value="IMPDH"/>
    <property type="match status" value="1"/>
</dbReference>
<dbReference type="PIRSF" id="PIRSF000130">
    <property type="entry name" value="IMPDH"/>
    <property type="match status" value="1"/>
</dbReference>
<dbReference type="SMART" id="SM00116">
    <property type="entry name" value="CBS"/>
    <property type="match status" value="2"/>
</dbReference>
<dbReference type="SMART" id="SM01240">
    <property type="entry name" value="IMPDH"/>
    <property type="match status" value="1"/>
</dbReference>
<dbReference type="SUPFAM" id="SSF54631">
    <property type="entry name" value="CBS-domain pair"/>
    <property type="match status" value="1"/>
</dbReference>
<dbReference type="SUPFAM" id="SSF51412">
    <property type="entry name" value="Inosine monophosphate dehydrogenase (IMPDH)"/>
    <property type="match status" value="1"/>
</dbReference>
<dbReference type="PROSITE" id="PS51371">
    <property type="entry name" value="CBS"/>
    <property type="match status" value="2"/>
</dbReference>
<dbReference type="PROSITE" id="PS00487">
    <property type="entry name" value="IMP_DH_GMP_RED"/>
    <property type="match status" value="1"/>
</dbReference>
<protein>
    <recommendedName>
        <fullName evidence="1">Inosine-5'-monophosphate dehydrogenase</fullName>
        <shortName evidence="1">IMP dehydrogenase</shortName>
        <shortName evidence="1">IMPD</shortName>
        <shortName evidence="1">IMPDH</shortName>
        <ecNumber evidence="1">1.1.1.205</ecNumber>
    </recommendedName>
</protein>
<sequence length="481" mass="51689">MRILQRALTFEDVLMVPRKSSVLPKDVSLKSRLTKNIGLNIPFISAAMDTVTEHKTAIAMARLGGIGIVHKNMDIQTQVKEITKVKKSESGVINDPIFIHAHRTLADAKVITDNYKISGVPVVDDKGLLIGILTNRDVRFETDLSKKVGDVMTKMPLVTAHVGISLDEASDLMHKHKIEKLPIVDKDNVLKGLITIKDIQKRIEYPEANKDDFGRLRVGAAIGVGQLDRAEMLVKAGVDALVLDSAHGHSANILHTLEEIKKSLVVDVIVGNVVTKEATSDLISAGADAVKVGIGPGSICTTRIVAGVGMPQVSAIDNCVEVASKFDIPVIADGGIRYSGDVAKALALGASSVMIGSLLAGTEESPGDFMIYQGRQYKSYRGMGSIGAMTKGSSDRYFQEGVASEKLVPEGIEGRVPYRGKVSDMIFQLVGGVRSSMGYQGAKNILELYQNAEFVEITSAGLKESHVHGVDITKEAPNYYG</sequence>
<keyword id="KW-0129">CBS domain</keyword>
<keyword id="KW-0332">GMP biosynthesis</keyword>
<keyword id="KW-0479">Metal-binding</keyword>
<keyword id="KW-0520">NAD</keyword>
<keyword id="KW-0560">Oxidoreductase</keyword>
<keyword id="KW-0630">Potassium</keyword>
<keyword id="KW-0658">Purine biosynthesis</keyword>
<keyword id="KW-0677">Repeat</keyword>
<feature type="chain" id="PRO_0000093699" description="Inosine-5'-monophosphate dehydrogenase">
    <location>
        <begin position="1"/>
        <end position="481"/>
    </location>
</feature>
<feature type="domain" description="CBS 1" evidence="1">
    <location>
        <begin position="92"/>
        <end position="148"/>
    </location>
</feature>
<feature type="domain" description="CBS 2" evidence="1">
    <location>
        <begin position="152"/>
        <end position="209"/>
    </location>
</feature>
<feature type="active site" description="Thioimidate intermediate" evidence="1">
    <location>
        <position position="300"/>
    </location>
</feature>
<feature type="active site" description="Proton acceptor" evidence="1">
    <location>
        <position position="396"/>
    </location>
</feature>
<feature type="binding site" evidence="1">
    <location>
        <position position="244"/>
    </location>
    <ligand>
        <name>NAD(+)</name>
        <dbReference type="ChEBI" id="CHEBI:57540"/>
    </ligand>
</feature>
<feature type="binding site" evidence="1">
    <location>
        <begin position="293"/>
        <end position="295"/>
    </location>
    <ligand>
        <name>NAD(+)</name>
        <dbReference type="ChEBI" id="CHEBI:57540"/>
    </ligand>
</feature>
<feature type="binding site" description="in other chain" evidence="1">
    <location>
        <position position="295"/>
    </location>
    <ligand>
        <name>K(+)</name>
        <dbReference type="ChEBI" id="CHEBI:29103"/>
        <note>ligand shared between two tetrameric partners</note>
    </ligand>
</feature>
<feature type="binding site" description="in other chain" evidence="1">
    <location>
        <position position="297"/>
    </location>
    <ligand>
        <name>K(+)</name>
        <dbReference type="ChEBI" id="CHEBI:29103"/>
        <note>ligand shared between two tetrameric partners</note>
    </ligand>
</feature>
<feature type="binding site" evidence="1">
    <location>
        <position position="298"/>
    </location>
    <ligand>
        <name>IMP</name>
        <dbReference type="ChEBI" id="CHEBI:58053"/>
    </ligand>
</feature>
<feature type="binding site" description="in other chain" evidence="1">
    <location>
        <position position="300"/>
    </location>
    <ligand>
        <name>K(+)</name>
        <dbReference type="ChEBI" id="CHEBI:29103"/>
        <note>ligand shared between two tetrameric partners</note>
    </ligand>
</feature>
<feature type="binding site" evidence="1">
    <location>
        <begin position="333"/>
        <end position="335"/>
    </location>
    <ligand>
        <name>IMP</name>
        <dbReference type="ChEBI" id="CHEBI:58053"/>
    </ligand>
</feature>
<feature type="binding site" evidence="1">
    <location>
        <begin position="356"/>
        <end position="357"/>
    </location>
    <ligand>
        <name>IMP</name>
        <dbReference type="ChEBI" id="CHEBI:58053"/>
    </ligand>
</feature>
<feature type="binding site" evidence="1">
    <location>
        <begin position="380"/>
        <end position="384"/>
    </location>
    <ligand>
        <name>IMP</name>
        <dbReference type="ChEBI" id="CHEBI:58053"/>
    </ligand>
</feature>
<feature type="binding site" evidence="1">
    <location>
        <position position="410"/>
    </location>
    <ligand>
        <name>IMP</name>
        <dbReference type="ChEBI" id="CHEBI:58053"/>
    </ligand>
</feature>
<feature type="binding site" evidence="1">
    <location>
        <position position="464"/>
    </location>
    <ligand>
        <name>K(+)</name>
        <dbReference type="ChEBI" id="CHEBI:29103"/>
        <note>ligand shared between two tetrameric partners</note>
    </ligand>
</feature>
<feature type="binding site" evidence="1">
    <location>
        <position position="465"/>
    </location>
    <ligand>
        <name>K(+)</name>
        <dbReference type="ChEBI" id="CHEBI:29103"/>
        <note>ligand shared between two tetrameric partners</note>
    </ligand>
</feature>
<feature type="binding site" evidence="1">
    <location>
        <position position="466"/>
    </location>
    <ligand>
        <name>K(+)</name>
        <dbReference type="ChEBI" id="CHEBI:29103"/>
        <note>ligand shared between two tetrameric partners</note>
    </ligand>
</feature>
<gene>
    <name evidence="1" type="primary">guaB</name>
    <name type="ordered locus">jhp_0768</name>
</gene>
<proteinExistence type="inferred from homology"/>
<accession>Q9ZL14</accession>
<reference key="1">
    <citation type="journal article" date="1999" name="Nature">
        <title>Genomic sequence comparison of two unrelated isolates of the human gastric pathogen Helicobacter pylori.</title>
        <authorList>
            <person name="Alm R.A."/>
            <person name="Ling L.-S.L."/>
            <person name="Moir D.T."/>
            <person name="King B.L."/>
            <person name="Brown E.D."/>
            <person name="Doig P.C."/>
            <person name="Smith D.R."/>
            <person name="Noonan B."/>
            <person name="Guild B.C."/>
            <person name="deJonge B.L."/>
            <person name="Carmel G."/>
            <person name="Tummino P.J."/>
            <person name="Caruso A."/>
            <person name="Uria-Nickelsen M."/>
            <person name="Mills D.M."/>
            <person name="Ives C."/>
            <person name="Gibson R."/>
            <person name="Merberg D."/>
            <person name="Mills S.D."/>
            <person name="Jiang Q."/>
            <person name="Taylor D.E."/>
            <person name="Vovis G.F."/>
            <person name="Trust T.J."/>
        </authorList>
    </citation>
    <scope>NUCLEOTIDE SEQUENCE [LARGE SCALE GENOMIC DNA]</scope>
    <source>
        <strain>J99 / ATCC 700824</strain>
    </source>
</reference>
<comment type="function">
    <text evidence="1">Catalyzes the conversion of inosine 5'-phosphate (IMP) to xanthosine 5'-phosphate (XMP), the first committed and rate-limiting step in the de novo synthesis of guanine nucleotides, and therefore plays an important role in the regulation of cell growth.</text>
</comment>
<comment type="catalytic activity">
    <reaction evidence="1">
        <text>IMP + NAD(+) + H2O = XMP + NADH + H(+)</text>
        <dbReference type="Rhea" id="RHEA:11708"/>
        <dbReference type="ChEBI" id="CHEBI:15377"/>
        <dbReference type="ChEBI" id="CHEBI:15378"/>
        <dbReference type="ChEBI" id="CHEBI:57464"/>
        <dbReference type="ChEBI" id="CHEBI:57540"/>
        <dbReference type="ChEBI" id="CHEBI:57945"/>
        <dbReference type="ChEBI" id="CHEBI:58053"/>
        <dbReference type="EC" id="1.1.1.205"/>
    </reaction>
</comment>
<comment type="cofactor">
    <cofactor evidence="1">
        <name>K(+)</name>
        <dbReference type="ChEBI" id="CHEBI:29103"/>
    </cofactor>
</comment>
<comment type="activity regulation">
    <text evidence="1">Mycophenolic acid (MPA) is a non-competitive inhibitor that prevents formation of the closed enzyme conformation by binding to the same site as the amobile flap. In contrast, mizoribine monophosphate (MZP) is a competitive inhibitor that induces the closed conformation. MPA is a potent inhibitor of mammalian IMPDHs but a poor inhibitor of the bacterial enzymes. MZP is a more potent inhibitor of bacterial IMPDH.</text>
</comment>
<comment type="pathway">
    <text evidence="1">Purine metabolism; XMP biosynthesis via de novo pathway; XMP from IMP: step 1/1.</text>
</comment>
<comment type="subunit">
    <text evidence="1">Homotetramer.</text>
</comment>
<comment type="similarity">
    <text evidence="1">Belongs to the IMPDH/GMPR family.</text>
</comment>
<name>IMDH_HELPJ</name>
<evidence type="ECO:0000255" key="1">
    <source>
        <dbReference type="HAMAP-Rule" id="MF_01964"/>
    </source>
</evidence>